<reference evidence="13" key="1">
    <citation type="journal article" date="1998" name="Science">
        <title>Genome sequence of the nematode C. elegans: a platform for investigating biology.</title>
        <authorList>
            <consortium name="The C. elegans sequencing consortium"/>
        </authorList>
    </citation>
    <scope>NUCLEOTIDE SEQUENCE [LARGE SCALE GENOMIC DNA]</scope>
    <source>
        <strain evidence="13">Bristol N2</strain>
    </source>
</reference>
<reference evidence="11" key="2">
    <citation type="journal article" date="2012" name="PLoS Biol.">
        <title>Two PI 3-kinases and one PI 3-phosphatase together establish the cyclic waves of phagosomal PtdIns(3)P critical for the degradation of apoptotic cells.</title>
        <authorList>
            <person name="Lu N."/>
            <person name="Shen Q."/>
            <person name="Mahoney T.R."/>
            <person name="Neukomm L.J."/>
            <person name="Wang Y."/>
            <person name="Zhou Z."/>
        </authorList>
    </citation>
    <scope>FUNCTION</scope>
    <scope>SUBCELLULAR LOCATION</scope>
    <scope>MUTAGENESIS OF LYS-1059</scope>
</reference>
<sequence>MSDDEELQLAIEISKKTFKDEQKLRSNDLDLIRFESPDEPARQRKINQIKQLYEANSPGPSSYSGSLATSPIDFRPVYNEPRAGPIPHSQSYPRNYFQDWSAIASTSQPPAFPPPPRPPKPEQYKFPPAPSVPLLHDRYFVPPPPPVPPRHSRVQQSPPVPIHPTPPVSSTPLRHSAPSFASDSQQFLSPIKPFEISFNSTVDTSSNQTGSHDHSIQYQPLTHLYVPYVMHSLNSSYGALLNGDLIDLSAFEDSSNASQDEIRKEFDPLFISTYSTDTPSPDNSMPAVNAYFSKPIDEPECVGGAKLIQENIEFPSSSFCLIDCPNGIEEQVKKLCKRNLIRKDMTPDFFIAPTVDYMVTTASTVKVVVYKDHSWKANKSNGKAMICAIDEKMDIITTQALSLFDSELPTDKEYGLKIYGLNQFLSSDSLLGSNLYTGHCLLNGDDVKLDLGVFAPNSRIYEQTLESWNLMKSQVKYSTVVDKEDVENTLGHLASEMSQYEIAFNDGSTLKLSSSSQRVKQVIMLLCKCLHGIVPEKLYNEMQKYLASTTEDQLVHHRNDFLREIHSFLELYCRCTVSRYNIPPLQIITKPKVEVLSKMDFLQIMLNSVHSIPEHWQSQYSEFYMSLDLYHGTQVLDGFSNKVPKTIKNDHFFPRIPLDLYAKFKRLNLCQYPRETRIVVSISGTVRNSAQAANEYNPDIVMLGYCSVPLYDENLFMRQGPLFLPLTLLKKQPMLKPFGPYPYIKDARDPILIMSFKIWDTEIYFPNVVIDMQCIPQDFATLDIETQEYLLELIENQDTSTLETDDQDLIWQKRLHLTNQPEALPLVLSSLQDWSFGFVMRVYQILEEWAPLRPEIAMEFLLPKYPDERIRAHAVQSLARGSTDFLYHTIPQFIEALRFELYEKSALADFILELSFVSLDFTFEIYWQLQQRVDHCAVDDLPYAIRCQNLQQKMIDEHENPNLKTDIKLQHELLNELDSIQDDLRSKSGDSEIERLHRLRTRLGILDSKLLQNKVRLPICPAFDCTGVRIEECSVFNSNAKPLKIVFRGLNMNYSIIHKRDDDMRQDAFVMKMLNEMDRIWKSNGLDLRMITFRIMPVGYRRGMGELVLNCATLMEIQKEEGLRGVLNDEILRKWLMKHNSDEFAYKEAQENFIRSCAGWCIVTYVLGIGDRHNDNILFTKNGHVFHIDFGKYMGDWQMAAGFRRDRVPFVFTTEMFHVINNGRAPTQYNQKFIDYCCKAFNHLRRNKNTLTNLLRIMACSDIPGINMDSLAFVENNLMLDLSDTDATVQFTAMIQNSLGSAFVRLNFVAHTVAQFISSRPSFSKQDPNKLSFVPELYTENSDGRISRVTVLKFEKHCIPNKIYMYKVEVHRKNVAVSSFIYRSFAEFEELHTKLRARFPMMAVSLNTISNLRSNVRAVAQKRIIHVQKFLIYLFNQVDEICHCDLVYTFFHSILRDNKCDTYIDESLDMPSQCQIYLKIEYNSVKETLSVFIGHAKYLALLQNNQQPDPYVKTYVRPDLRNQSKQKTQVVRGTRHPTFNQDLNYTEFPIEILSTRVLEVSIWNNGGYLVKHKMYMLCIPLLKVKKLAESRKNCRTLEGWFNCEKCV</sequence>
<comment type="function">
    <text evidence="9">Phosphatidylinositol 3-kinase involved in clearance of apoptotic cell corpses by phagosomes. Phagosome maturation requires two sequential and non-overlapping pulses of phosphatidylinositol-3-phosphate (PI3P) on the vesicle surface which mediates recruitment of sortins snx-1 and lst-4 and small GTPases rab-5, rab-2 and rab-7. The first pulse is initiated by piki-1, then maintained by vps-34 which also produces the second pulse. Unlike vps-34, not involved in the formation of PI3P in early endosomes.</text>
</comment>
<comment type="catalytic activity">
    <reaction evidence="12">
        <text>a 1,2-diacyl-sn-glycero-3-phospho-(1D-myo-inositol) + ATP = a 1,2-diacyl-sn-glycero-3-phospho-(1D-myo-inositol-3-phosphate) + ADP + H(+)</text>
        <dbReference type="Rhea" id="RHEA:12709"/>
        <dbReference type="ChEBI" id="CHEBI:15378"/>
        <dbReference type="ChEBI" id="CHEBI:30616"/>
        <dbReference type="ChEBI" id="CHEBI:57880"/>
        <dbReference type="ChEBI" id="CHEBI:58088"/>
        <dbReference type="ChEBI" id="CHEBI:456216"/>
        <dbReference type="EC" id="2.7.1.137"/>
    </reaction>
</comment>
<comment type="interaction">
    <interactant intactId="EBI-321433">
        <id>G5EDY0</id>
    </interactant>
    <interactant intactId="EBI-314179">
        <id>Q21648</id>
        <label>CELE_R02F2.5</label>
    </interactant>
    <organismsDiffer>false</organismsDiffer>
    <experiments>3</experiments>
</comment>
<comment type="subcellular location">
    <subcellularLocation>
        <location evidence="9">Cell projection</location>
        <location evidence="9">Phagocytic cup</location>
    </subcellularLocation>
    <subcellularLocation>
        <location evidence="9">Cytoplasmic vesicle</location>
        <location evidence="9">Phagosome membrane</location>
        <topology evidence="9">Peripheral membrane protein</topology>
    </subcellularLocation>
    <subcellularLocation>
        <location evidence="9">Cytoplasm</location>
    </subcellularLocation>
    <text evidence="9">Localizes transiently to pseudopods and nascent phagosomes during cell corpse engulfment.</text>
</comment>
<comment type="similarity">
    <text evidence="6">Belongs to the PI3/PI4-kinase family.</text>
</comment>
<organism evidence="13">
    <name type="scientific">Caenorhabditis elegans</name>
    <dbReference type="NCBI Taxonomy" id="6239"/>
    <lineage>
        <taxon>Eukaryota</taxon>
        <taxon>Metazoa</taxon>
        <taxon>Ecdysozoa</taxon>
        <taxon>Nematoda</taxon>
        <taxon>Chromadorea</taxon>
        <taxon>Rhabditida</taxon>
        <taxon>Rhabditina</taxon>
        <taxon>Rhabditomorpha</taxon>
        <taxon>Rhabditoidea</taxon>
        <taxon>Rhabditidae</taxon>
        <taxon>Peloderinae</taxon>
        <taxon>Caenorhabditis</taxon>
    </lineage>
</organism>
<dbReference type="EC" id="2.7.1.137" evidence="12"/>
<dbReference type="EMBL" id="BX284606">
    <property type="protein sequence ID" value="CAA93489.1"/>
    <property type="molecule type" value="Genomic_DNA"/>
</dbReference>
<dbReference type="PIR" id="T21982">
    <property type="entry name" value="T21982"/>
</dbReference>
<dbReference type="RefSeq" id="NP_510529.1">
    <property type="nucleotide sequence ID" value="NM_078128.6"/>
</dbReference>
<dbReference type="SMR" id="G5EDY0"/>
<dbReference type="FunCoup" id="G5EDY0">
    <property type="interactions" value="2065"/>
</dbReference>
<dbReference type="IntAct" id="G5EDY0">
    <property type="interactions" value="2"/>
</dbReference>
<dbReference type="STRING" id="6239.F39B1.1.1"/>
<dbReference type="PaxDb" id="6239-F39B1.1"/>
<dbReference type="PeptideAtlas" id="G5EDY0"/>
<dbReference type="EnsemblMetazoa" id="F39B1.1.1">
    <property type="protein sequence ID" value="F39B1.1.1"/>
    <property type="gene ID" value="WBGene00009552"/>
</dbReference>
<dbReference type="GeneID" id="181618"/>
<dbReference type="KEGG" id="cel:CELE_F39B1.1"/>
<dbReference type="AGR" id="WB:WBGene00009552"/>
<dbReference type="CTD" id="181618"/>
<dbReference type="WormBase" id="F39B1.1">
    <property type="protein sequence ID" value="CE05832"/>
    <property type="gene ID" value="WBGene00009552"/>
    <property type="gene designation" value="piki-1"/>
</dbReference>
<dbReference type="eggNOG" id="KOG0905">
    <property type="taxonomic scope" value="Eukaryota"/>
</dbReference>
<dbReference type="GeneTree" id="ENSGT00940000169868"/>
<dbReference type="HOGENOM" id="CLU_002191_0_0_1"/>
<dbReference type="InParanoid" id="G5EDY0"/>
<dbReference type="OMA" id="QMAAGFR"/>
<dbReference type="OrthoDB" id="67688at2759"/>
<dbReference type="PhylomeDB" id="G5EDY0"/>
<dbReference type="PRO" id="PR:G5EDY0"/>
<dbReference type="Proteomes" id="UP000001940">
    <property type="component" value="Chromosome X"/>
</dbReference>
<dbReference type="Bgee" id="WBGene00009552">
    <property type="expression patterns" value="Expressed in pharyngeal muscle cell (C elegans) and 3 other cell types or tissues"/>
</dbReference>
<dbReference type="GO" id="GO:0005737">
    <property type="term" value="C:cytoplasm"/>
    <property type="evidence" value="ECO:0000314"/>
    <property type="project" value="WormBase"/>
</dbReference>
<dbReference type="GO" id="GO:0032009">
    <property type="term" value="C:early phagosome"/>
    <property type="evidence" value="ECO:0000314"/>
    <property type="project" value="WormBase"/>
</dbReference>
<dbReference type="GO" id="GO:0001891">
    <property type="term" value="C:phagocytic cup"/>
    <property type="evidence" value="ECO:0007669"/>
    <property type="project" value="UniProtKB-SubCell"/>
</dbReference>
<dbReference type="GO" id="GO:0030670">
    <property type="term" value="C:phagocytic vesicle membrane"/>
    <property type="evidence" value="ECO:0007669"/>
    <property type="project" value="UniProtKB-SubCell"/>
</dbReference>
<dbReference type="GO" id="GO:0005886">
    <property type="term" value="C:plasma membrane"/>
    <property type="evidence" value="ECO:0000318"/>
    <property type="project" value="GO_Central"/>
</dbReference>
<dbReference type="GO" id="GO:0031143">
    <property type="term" value="C:pseudopodium"/>
    <property type="evidence" value="ECO:0000314"/>
    <property type="project" value="WormBase"/>
</dbReference>
<dbReference type="GO" id="GO:0016303">
    <property type="term" value="F:1-phosphatidylinositol-3-kinase activity"/>
    <property type="evidence" value="ECO:0000250"/>
    <property type="project" value="WormBase"/>
</dbReference>
<dbReference type="GO" id="GO:0035005">
    <property type="term" value="F:1-phosphatidylinositol-4-phosphate 3-kinase activity"/>
    <property type="evidence" value="ECO:0000318"/>
    <property type="project" value="GO_Central"/>
</dbReference>
<dbReference type="GO" id="GO:0035091">
    <property type="term" value="F:phosphatidylinositol binding"/>
    <property type="evidence" value="ECO:0007669"/>
    <property type="project" value="InterPro"/>
</dbReference>
<dbReference type="GO" id="GO:0016477">
    <property type="term" value="P:cell migration"/>
    <property type="evidence" value="ECO:0000318"/>
    <property type="project" value="GO_Central"/>
</dbReference>
<dbReference type="GO" id="GO:0002119">
    <property type="term" value="P:nematode larval development"/>
    <property type="evidence" value="ECO:0000316"/>
    <property type="project" value="WormBase"/>
</dbReference>
<dbReference type="GO" id="GO:0090386">
    <property type="term" value="P:phagosome maturation involved in apoptotic cell clearance"/>
    <property type="evidence" value="ECO:0000315"/>
    <property type="project" value="WormBase"/>
</dbReference>
<dbReference type="GO" id="GO:0043491">
    <property type="term" value="P:phosphatidylinositol 3-kinase/protein kinase B signal transduction"/>
    <property type="evidence" value="ECO:0000318"/>
    <property type="project" value="GO_Central"/>
</dbReference>
<dbReference type="GO" id="GO:0036092">
    <property type="term" value="P:phosphatidylinositol-3-phosphate biosynthetic process"/>
    <property type="evidence" value="ECO:0000315"/>
    <property type="project" value="WormBase"/>
</dbReference>
<dbReference type="GO" id="GO:0048015">
    <property type="term" value="P:phosphatidylinositol-mediated signaling"/>
    <property type="evidence" value="ECO:0000318"/>
    <property type="project" value="GO_Central"/>
</dbReference>
<dbReference type="GO" id="GO:0060100">
    <property type="term" value="P:positive regulation of phagocytosis, engulfment"/>
    <property type="evidence" value="ECO:0000315"/>
    <property type="project" value="WormBase"/>
</dbReference>
<dbReference type="CDD" id="cd04012">
    <property type="entry name" value="C2A_PI3K_class_II"/>
    <property type="match status" value="1"/>
</dbReference>
<dbReference type="CDD" id="cd08381">
    <property type="entry name" value="C2B_PI3K_class_II"/>
    <property type="match status" value="1"/>
</dbReference>
<dbReference type="CDD" id="cd00869">
    <property type="entry name" value="PI3Ka_II"/>
    <property type="match status" value="1"/>
</dbReference>
<dbReference type="CDD" id="cd05166">
    <property type="entry name" value="PI3Kc_II"/>
    <property type="match status" value="1"/>
</dbReference>
<dbReference type="FunFam" id="3.30.1010.10:FF:000001">
    <property type="entry name" value="Phosphatidylinositol 4-phosphate 3-kinase C2 domain-containing subunit beta"/>
    <property type="match status" value="1"/>
</dbReference>
<dbReference type="Gene3D" id="2.60.40.150">
    <property type="entry name" value="C2 domain"/>
    <property type="match status" value="2"/>
</dbReference>
<dbReference type="Gene3D" id="1.10.1070.11">
    <property type="entry name" value="Phosphatidylinositol 3-/4-kinase, catalytic domain"/>
    <property type="match status" value="1"/>
</dbReference>
<dbReference type="Gene3D" id="3.30.1010.10">
    <property type="entry name" value="Phosphatidylinositol 3-kinase Catalytic Subunit, Chain A, domain 4"/>
    <property type="match status" value="1"/>
</dbReference>
<dbReference type="Gene3D" id="1.25.40.70">
    <property type="entry name" value="Phosphatidylinositol 3-kinase, accessory domain (PIK)"/>
    <property type="match status" value="1"/>
</dbReference>
<dbReference type="Gene3D" id="3.30.1520.10">
    <property type="entry name" value="Phox-like domain"/>
    <property type="match status" value="1"/>
</dbReference>
<dbReference type="InterPro" id="IPR016024">
    <property type="entry name" value="ARM-type_fold"/>
</dbReference>
<dbReference type="InterPro" id="IPR000008">
    <property type="entry name" value="C2_dom"/>
</dbReference>
<dbReference type="InterPro" id="IPR035892">
    <property type="entry name" value="C2_domain_sf"/>
</dbReference>
<dbReference type="InterPro" id="IPR011009">
    <property type="entry name" value="Kinase-like_dom_sf"/>
</dbReference>
<dbReference type="InterPro" id="IPR000403">
    <property type="entry name" value="PI3/4_kinase_cat_dom"/>
</dbReference>
<dbReference type="InterPro" id="IPR036940">
    <property type="entry name" value="PI3/4_kinase_cat_sf"/>
</dbReference>
<dbReference type="InterPro" id="IPR018936">
    <property type="entry name" value="PI3/4_kinase_CS"/>
</dbReference>
<dbReference type="InterPro" id="IPR002420">
    <property type="entry name" value="PI3K-type_C2_dom"/>
</dbReference>
<dbReference type="InterPro" id="IPR001263">
    <property type="entry name" value="PI3K_accessory_dom"/>
</dbReference>
<dbReference type="InterPro" id="IPR042236">
    <property type="entry name" value="PI3K_accessory_sf"/>
</dbReference>
<dbReference type="InterPro" id="IPR000341">
    <property type="entry name" value="PI3K_Ras-bd_dom"/>
</dbReference>
<dbReference type="InterPro" id="IPR015433">
    <property type="entry name" value="PI_Kinase"/>
</dbReference>
<dbReference type="InterPro" id="IPR001683">
    <property type="entry name" value="PX_dom"/>
</dbReference>
<dbReference type="InterPro" id="IPR036871">
    <property type="entry name" value="PX_dom_sf"/>
</dbReference>
<dbReference type="InterPro" id="IPR003903">
    <property type="entry name" value="UIM_dom"/>
</dbReference>
<dbReference type="PANTHER" id="PTHR10048:SF14">
    <property type="entry name" value="LD28067P"/>
    <property type="match status" value="1"/>
</dbReference>
<dbReference type="PANTHER" id="PTHR10048">
    <property type="entry name" value="PHOSPHATIDYLINOSITOL KINASE"/>
    <property type="match status" value="1"/>
</dbReference>
<dbReference type="Pfam" id="PF00168">
    <property type="entry name" value="C2"/>
    <property type="match status" value="1"/>
</dbReference>
<dbReference type="Pfam" id="PF00454">
    <property type="entry name" value="PI3_PI4_kinase"/>
    <property type="match status" value="1"/>
</dbReference>
<dbReference type="Pfam" id="PF00613">
    <property type="entry name" value="PI3Ka"/>
    <property type="match status" value="1"/>
</dbReference>
<dbReference type="Pfam" id="PF00787">
    <property type="entry name" value="PX"/>
    <property type="match status" value="1"/>
</dbReference>
<dbReference type="SMART" id="SM00239">
    <property type="entry name" value="C2"/>
    <property type="match status" value="1"/>
</dbReference>
<dbReference type="SMART" id="SM00142">
    <property type="entry name" value="PI3K_C2"/>
    <property type="match status" value="1"/>
</dbReference>
<dbReference type="SMART" id="SM00144">
    <property type="entry name" value="PI3K_rbd"/>
    <property type="match status" value="1"/>
</dbReference>
<dbReference type="SMART" id="SM00145">
    <property type="entry name" value="PI3Ka"/>
    <property type="match status" value="1"/>
</dbReference>
<dbReference type="SMART" id="SM00146">
    <property type="entry name" value="PI3Kc"/>
    <property type="match status" value="1"/>
</dbReference>
<dbReference type="SMART" id="SM00312">
    <property type="entry name" value="PX"/>
    <property type="match status" value="1"/>
</dbReference>
<dbReference type="SUPFAM" id="SSF48371">
    <property type="entry name" value="ARM repeat"/>
    <property type="match status" value="1"/>
</dbReference>
<dbReference type="SUPFAM" id="SSF49562">
    <property type="entry name" value="C2 domain (Calcium/lipid-binding domain, CaLB)"/>
    <property type="match status" value="2"/>
</dbReference>
<dbReference type="SUPFAM" id="SSF56112">
    <property type="entry name" value="Protein kinase-like (PK-like)"/>
    <property type="match status" value="1"/>
</dbReference>
<dbReference type="SUPFAM" id="SSF64268">
    <property type="entry name" value="PX domain"/>
    <property type="match status" value="1"/>
</dbReference>
<dbReference type="PROSITE" id="PS50004">
    <property type="entry name" value="C2"/>
    <property type="match status" value="1"/>
</dbReference>
<dbReference type="PROSITE" id="PS51547">
    <property type="entry name" value="C2_PI3K"/>
    <property type="match status" value="1"/>
</dbReference>
<dbReference type="PROSITE" id="PS00916">
    <property type="entry name" value="PI3_4_KINASE_2"/>
    <property type="match status" value="1"/>
</dbReference>
<dbReference type="PROSITE" id="PS50290">
    <property type="entry name" value="PI3_4_KINASE_3"/>
    <property type="match status" value="1"/>
</dbReference>
<dbReference type="PROSITE" id="PS51546">
    <property type="entry name" value="PI3K_RBD"/>
    <property type="match status" value="1"/>
</dbReference>
<dbReference type="PROSITE" id="PS51545">
    <property type="entry name" value="PIK_HELICAL"/>
    <property type="match status" value="1"/>
</dbReference>
<dbReference type="PROSITE" id="PS50195">
    <property type="entry name" value="PX"/>
    <property type="match status" value="1"/>
</dbReference>
<dbReference type="PROSITE" id="PS50330">
    <property type="entry name" value="UIM"/>
    <property type="match status" value="1"/>
</dbReference>
<name>PIKI1_CAEEL</name>
<protein>
    <recommendedName>
        <fullName evidence="12">Phosphatidylinositol 3-kinase piki-1</fullName>
        <ecNumber evidence="12">2.7.1.137</ecNumber>
    </recommendedName>
    <alternativeName>
        <fullName evidence="10">Phosphoinositide-3-kinase class 2</fullName>
        <shortName evidence="10">PI3-kinase class 2</shortName>
        <shortName evidence="10">PI3K class 2</shortName>
    </alternativeName>
</protein>
<proteinExistence type="evidence at protein level"/>
<feature type="chain" id="PRO_0000436266" description="Phosphatidylinositol 3-kinase piki-1" evidence="11">
    <location>
        <begin position="1"/>
        <end position="1607"/>
    </location>
</feature>
<feature type="domain" description="UIM" evidence="3">
    <location>
        <begin position="2"/>
        <end position="21"/>
    </location>
</feature>
<feature type="domain" description="PI3K-RBD" evidence="6">
    <location>
        <begin position="362"/>
        <end position="453"/>
    </location>
</feature>
<feature type="domain" description="C2 PI3K-type" evidence="7">
    <location>
        <begin position="598"/>
        <end position="766"/>
    </location>
</feature>
<feature type="domain" description="PIK helical" evidence="5">
    <location>
        <begin position="776"/>
        <end position="953"/>
    </location>
</feature>
<feature type="domain" description="PI3K/PI4K catalytic" evidence="4">
    <location>
        <begin position="1029"/>
        <end position="1303"/>
    </location>
</feature>
<feature type="domain" description="PX" evidence="2">
    <location>
        <begin position="1344"/>
        <end position="1458"/>
    </location>
</feature>
<feature type="domain" description="C2" evidence="1">
    <location>
        <begin position="1472"/>
        <end position="1601"/>
    </location>
</feature>
<feature type="region of interest" description="Disordered" evidence="8">
    <location>
        <begin position="54"/>
        <end position="91"/>
    </location>
</feature>
<feature type="region of interest" description="Disordered" evidence="8">
    <location>
        <begin position="105"/>
        <end position="128"/>
    </location>
</feature>
<feature type="region of interest" description="Disordered" evidence="8">
    <location>
        <begin position="142"/>
        <end position="182"/>
    </location>
</feature>
<feature type="region of interest" description="G-loop" evidence="4">
    <location>
        <begin position="1035"/>
        <end position="1041"/>
    </location>
</feature>
<feature type="region of interest" description="Catalytic loop" evidence="4">
    <location>
        <begin position="1168"/>
        <end position="1176"/>
    </location>
</feature>
<feature type="region of interest" description="Activation loop" evidence="4">
    <location>
        <begin position="1187"/>
        <end position="1213"/>
    </location>
</feature>
<feature type="compositionally biased region" description="Polar residues" evidence="8">
    <location>
        <begin position="58"/>
        <end position="69"/>
    </location>
</feature>
<feature type="compositionally biased region" description="Pro residues" evidence="8">
    <location>
        <begin position="158"/>
        <end position="169"/>
    </location>
</feature>
<feature type="mutagenesis site" description="May disrupt ATP binding. Severe defect in apoptotic cell corpse clearance in gonads." evidence="9">
    <original>K</original>
    <variation>A</variation>
    <location>
        <position position="1059"/>
    </location>
</feature>
<gene>
    <name evidence="14" type="primary">piki-1</name>
    <name evidence="14" type="ORF">F39B1.1</name>
</gene>
<accession>G5EDY0</accession>
<evidence type="ECO:0000255" key="1">
    <source>
        <dbReference type="PROSITE-ProRule" id="PRU00041"/>
    </source>
</evidence>
<evidence type="ECO:0000255" key="2">
    <source>
        <dbReference type="PROSITE-ProRule" id="PRU00147"/>
    </source>
</evidence>
<evidence type="ECO:0000255" key="3">
    <source>
        <dbReference type="PROSITE-ProRule" id="PRU00213"/>
    </source>
</evidence>
<evidence type="ECO:0000255" key="4">
    <source>
        <dbReference type="PROSITE-ProRule" id="PRU00269"/>
    </source>
</evidence>
<evidence type="ECO:0000255" key="5">
    <source>
        <dbReference type="PROSITE-ProRule" id="PRU00878"/>
    </source>
</evidence>
<evidence type="ECO:0000255" key="6">
    <source>
        <dbReference type="PROSITE-ProRule" id="PRU00879"/>
    </source>
</evidence>
<evidence type="ECO:0000255" key="7">
    <source>
        <dbReference type="PROSITE-ProRule" id="PRU00880"/>
    </source>
</evidence>
<evidence type="ECO:0000256" key="8">
    <source>
        <dbReference type="SAM" id="MobiDB-lite"/>
    </source>
</evidence>
<evidence type="ECO:0000269" key="9">
    <source>
    </source>
</evidence>
<evidence type="ECO:0000303" key="10">
    <source>
    </source>
</evidence>
<evidence type="ECO:0000305" key="11"/>
<evidence type="ECO:0000305" key="12">
    <source>
    </source>
</evidence>
<evidence type="ECO:0000312" key="13">
    <source>
        <dbReference type="Proteomes" id="UP000001940"/>
    </source>
</evidence>
<evidence type="ECO:0000312" key="14">
    <source>
        <dbReference type="WormBase" id="F39B1.1"/>
    </source>
</evidence>
<keyword id="KW-0966">Cell projection</keyword>
<keyword id="KW-0963">Cytoplasm</keyword>
<keyword id="KW-0968">Cytoplasmic vesicle</keyword>
<keyword id="KW-0418">Kinase</keyword>
<keyword id="KW-0444">Lipid biosynthesis</keyword>
<keyword id="KW-0443">Lipid metabolism</keyword>
<keyword id="KW-0472">Membrane</keyword>
<keyword id="KW-0581">Phagocytosis</keyword>
<keyword id="KW-1185">Reference proteome</keyword>
<keyword id="KW-0808">Transferase</keyword>